<proteinExistence type="inferred from homology"/>
<name>IF2_BACCQ</name>
<dbReference type="EMBL" id="CP000227">
    <property type="protein sequence ID" value="ACM14025.1"/>
    <property type="molecule type" value="Genomic_DNA"/>
</dbReference>
<dbReference type="SMR" id="B9IVA1"/>
<dbReference type="KEGG" id="bcq:BCQ_3597"/>
<dbReference type="HOGENOM" id="CLU_006301_5_1_9"/>
<dbReference type="Proteomes" id="UP000000441">
    <property type="component" value="Chromosome"/>
</dbReference>
<dbReference type="GO" id="GO:0005829">
    <property type="term" value="C:cytosol"/>
    <property type="evidence" value="ECO:0007669"/>
    <property type="project" value="TreeGrafter"/>
</dbReference>
<dbReference type="GO" id="GO:0005525">
    <property type="term" value="F:GTP binding"/>
    <property type="evidence" value="ECO:0007669"/>
    <property type="project" value="UniProtKB-KW"/>
</dbReference>
<dbReference type="GO" id="GO:0003924">
    <property type="term" value="F:GTPase activity"/>
    <property type="evidence" value="ECO:0007669"/>
    <property type="project" value="UniProtKB-UniRule"/>
</dbReference>
<dbReference type="GO" id="GO:0003743">
    <property type="term" value="F:translation initiation factor activity"/>
    <property type="evidence" value="ECO:0007669"/>
    <property type="project" value="UniProtKB-UniRule"/>
</dbReference>
<dbReference type="CDD" id="cd01887">
    <property type="entry name" value="IF2_eIF5B"/>
    <property type="match status" value="1"/>
</dbReference>
<dbReference type="CDD" id="cd03702">
    <property type="entry name" value="IF2_mtIF2_II"/>
    <property type="match status" value="1"/>
</dbReference>
<dbReference type="CDD" id="cd03692">
    <property type="entry name" value="mtIF2_IVc"/>
    <property type="match status" value="1"/>
</dbReference>
<dbReference type="FunFam" id="1.10.10.2480:FF:000001">
    <property type="entry name" value="Translation initiation factor IF-2"/>
    <property type="match status" value="1"/>
</dbReference>
<dbReference type="FunFam" id="2.40.30.10:FF:000007">
    <property type="entry name" value="Translation initiation factor IF-2"/>
    <property type="match status" value="1"/>
</dbReference>
<dbReference type="FunFam" id="2.40.30.10:FF:000008">
    <property type="entry name" value="Translation initiation factor IF-2"/>
    <property type="match status" value="1"/>
</dbReference>
<dbReference type="FunFam" id="3.40.50.10050:FF:000001">
    <property type="entry name" value="Translation initiation factor IF-2"/>
    <property type="match status" value="1"/>
</dbReference>
<dbReference type="FunFam" id="3.40.50.300:FF:000019">
    <property type="entry name" value="Translation initiation factor IF-2"/>
    <property type="match status" value="1"/>
</dbReference>
<dbReference type="Gene3D" id="1.10.10.2480">
    <property type="match status" value="1"/>
</dbReference>
<dbReference type="Gene3D" id="3.40.50.300">
    <property type="entry name" value="P-loop containing nucleotide triphosphate hydrolases"/>
    <property type="match status" value="1"/>
</dbReference>
<dbReference type="Gene3D" id="2.40.30.10">
    <property type="entry name" value="Translation factors"/>
    <property type="match status" value="2"/>
</dbReference>
<dbReference type="Gene3D" id="3.40.50.10050">
    <property type="entry name" value="Translation initiation factor IF- 2, domain 3"/>
    <property type="match status" value="1"/>
</dbReference>
<dbReference type="HAMAP" id="MF_00100_B">
    <property type="entry name" value="IF_2_B"/>
    <property type="match status" value="1"/>
</dbReference>
<dbReference type="InterPro" id="IPR053905">
    <property type="entry name" value="EF-G-like_DII"/>
</dbReference>
<dbReference type="InterPro" id="IPR044145">
    <property type="entry name" value="IF2_II"/>
</dbReference>
<dbReference type="InterPro" id="IPR006847">
    <property type="entry name" value="IF2_N"/>
</dbReference>
<dbReference type="InterPro" id="IPR027417">
    <property type="entry name" value="P-loop_NTPase"/>
</dbReference>
<dbReference type="InterPro" id="IPR005225">
    <property type="entry name" value="Small_GTP-bd"/>
</dbReference>
<dbReference type="InterPro" id="IPR000795">
    <property type="entry name" value="T_Tr_GTP-bd_dom"/>
</dbReference>
<dbReference type="InterPro" id="IPR000178">
    <property type="entry name" value="TF_IF2_bacterial-like"/>
</dbReference>
<dbReference type="InterPro" id="IPR015760">
    <property type="entry name" value="TIF_IF2"/>
</dbReference>
<dbReference type="InterPro" id="IPR023115">
    <property type="entry name" value="TIF_IF2_dom3"/>
</dbReference>
<dbReference type="InterPro" id="IPR036925">
    <property type="entry name" value="TIF_IF2_dom3_sf"/>
</dbReference>
<dbReference type="InterPro" id="IPR009000">
    <property type="entry name" value="Transl_B-barrel_sf"/>
</dbReference>
<dbReference type="NCBIfam" id="TIGR00487">
    <property type="entry name" value="IF-2"/>
    <property type="match status" value="1"/>
</dbReference>
<dbReference type="NCBIfam" id="TIGR00231">
    <property type="entry name" value="small_GTP"/>
    <property type="match status" value="1"/>
</dbReference>
<dbReference type="PANTHER" id="PTHR43381:SF5">
    <property type="entry name" value="TR-TYPE G DOMAIN-CONTAINING PROTEIN"/>
    <property type="match status" value="1"/>
</dbReference>
<dbReference type="PANTHER" id="PTHR43381">
    <property type="entry name" value="TRANSLATION INITIATION FACTOR IF-2-RELATED"/>
    <property type="match status" value="1"/>
</dbReference>
<dbReference type="Pfam" id="PF22042">
    <property type="entry name" value="EF-G_D2"/>
    <property type="match status" value="1"/>
</dbReference>
<dbReference type="Pfam" id="PF00009">
    <property type="entry name" value="GTP_EFTU"/>
    <property type="match status" value="1"/>
</dbReference>
<dbReference type="Pfam" id="PF11987">
    <property type="entry name" value="IF-2"/>
    <property type="match status" value="1"/>
</dbReference>
<dbReference type="Pfam" id="PF04760">
    <property type="entry name" value="IF2_N"/>
    <property type="match status" value="2"/>
</dbReference>
<dbReference type="SUPFAM" id="SSF52156">
    <property type="entry name" value="Initiation factor IF2/eIF5b, domain 3"/>
    <property type="match status" value="1"/>
</dbReference>
<dbReference type="SUPFAM" id="SSF52540">
    <property type="entry name" value="P-loop containing nucleoside triphosphate hydrolases"/>
    <property type="match status" value="1"/>
</dbReference>
<dbReference type="SUPFAM" id="SSF50447">
    <property type="entry name" value="Translation proteins"/>
    <property type="match status" value="2"/>
</dbReference>
<dbReference type="PROSITE" id="PS51722">
    <property type="entry name" value="G_TR_2"/>
    <property type="match status" value="1"/>
</dbReference>
<dbReference type="PROSITE" id="PS01176">
    <property type="entry name" value="IF2"/>
    <property type="match status" value="1"/>
</dbReference>
<reference key="1">
    <citation type="journal article" date="2009" name="J. Bacteriol.">
        <title>Complete genome sequence of the extremophilic Bacillus cereus strain Q1 with industrial applications.</title>
        <authorList>
            <person name="Xiong Z."/>
            <person name="Jiang Y."/>
            <person name="Qi D."/>
            <person name="Lu H."/>
            <person name="Yang F."/>
            <person name="Yang J."/>
            <person name="Chen L."/>
            <person name="Sun L."/>
            <person name="Xu X."/>
            <person name="Xue Y."/>
            <person name="Zhu Y."/>
            <person name="Jin Q."/>
        </authorList>
    </citation>
    <scope>NUCLEOTIDE SEQUENCE [LARGE SCALE GENOMIC DNA]</scope>
    <source>
        <strain>Q1</strain>
    </source>
</reference>
<organism>
    <name type="scientific">Bacillus cereus (strain Q1)</name>
    <dbReference type="NCBI Taxonomy" id="361100"/>
    <lineage>
        <taxon>Bacteria</taxon>
        <taxon>Bacillati</taxon>
        <taxon>Bacillota</taxon>
        <taxon>Bacilli</taxon>
        <taxon>Bacillales</taxon>
        <taxon>Bacillaceae</taxon>
        <taxon>Bacillus</taxon>
        <taxon>Bacillus cereus group</taxon>
    </lineage>
</organism>
<keyword id="KW-0963">Cytoplasm</keyword>
<keyword id="KW-0342">GTP-binding</keyword>
<keyword id="KW-0396">Initiation factor</keyword>
<keyword id="KW-0547">Nucleotide-binding</keyword>
<keyword id="KW-0648">Protein biosynthesis</keyword>
<feature type="chain" id="PRO_1000118749" description="Translation initiation factor IF-2">
    <location>
        <begin position="1"/>
        <end position="686"/>
    </location>
</feature>
<feature type="domain" description="tr-type G">
    <location>
        <begin position="188"/>
        <end position="357"/>
    </location>
</feature>
<feature type="region of interest" description="Disordered" evidence="3">
    <location>
        <begin position="54"/>
        <end position="105"/>
    </location>
</feature>
<feature type="region of interest" description="G1" evidence="1">
    <location>
        <begin position="197"/>
        <end position="204"/>
    </location>
</feature>
<feature type="region of interest" description="G2" evidence="1">
    <location>
        <begin position="222"/>
        <end position="226"/>
    </location>
</feature>
<feature type="region of interest" description="G3" evidence="1">
    <location>
        <begin position="243"/>
        <end position="246"/>
    </location>
</feature>
<feature type="region of interest" description="G4" evidence="1">
    <location>
        <begin position="297"/>
        <end position="300"/>
    </location>
</feature>
<feature type="region of interest" description="G5" evidence="1">
    <location>
        <begin position="333"/>
        <end position="335"/>
    </location>
</feature>
<feature type="compositionally biased region" description="Basic residues" evidence="3">
    <location>
        <begin position="69"/>
        <end position="81"/>
    </location>
</feature>
<feature type="binding site" evidence="2">
    <location>
        <begin position="197"/>
        <end position="204"/>
    </location>
    <ligand>
        <name>GTP</name>
        <dbReference type="ChEBI" id="CHEBI:37565"/>
    </ligand>
</feature>
<feature type="binding site" evidence="2">
    <location>
        <begin position="243"/>
        <end position="247"/>
    </location>
    <ligand>
        <name>GTP</name>
        <dbReference type="ChEBI" id="CHEBI:37565"/>
    </ligand>
</feature>
<feature type="binding site" evidence="2">
    <location>
        <begin position="297"/>
        <end position="300"/>
    </location>
    <ligand>
        <name>GTP</name>
        <dbReference type="ChEBI" id="CHEBI:37565"/>
    </ligand>
</feature>
<gene>
    <name evidence="2" type="primary">infB</name>
    <name type="ordered locus">BCQ_3597</name>
</gene>
<sequence length="686" mass="75726">MSKIRVHEYAKKHNISSKDLMTKLKEMNIEVSNHMTMLDDEVVNKLDNEYQAEKPSVADEFEVEEKVVRSKKNSNKKKKKGKGNEDKRQENFAGRQQTQTVETPDKITFSGSLTVGDLAKKLSKEPSEIIKKLFMLGIMATINQDLDKDTIELIANDYGIEVEEEVIVSETEFETFIDEQDDEENLKERPAVVTIMGHVDHGKTTLLDSIRNSKVTAGEAGGITQHIGAYQVEVNDKKITFLDTPGHAAFTTMRARGAQVTDITILVVAADDGVMPQTVEAINHAKAAGVPIIVAVNKMDKPAANPDRVMQELTEYELVPEAWGGDTIFVPISAIQGEGIDNLLEMILLVSEVEEYKANPNRYATGTVIEAQLDKGKGTIATLLVQNGTLRVGDPIVVGTTFGRVRAMVSDIGRRVKVAGPSTPVEITGLNEVPQAGDRFMAFADEKKARQIGESRAQEALLAQRGEKSKLSLEDLFQQIQEGDVKEINLIVKADVQGSVEAMAASLRKIDVEGVKVKIIHTGVGAITESDIILASASNAIVIGFNVRPDVNAKRTAELENVDIRLHRIIYKVIEEIEAAMQGMLDPEFEEKVIGQAEVRQTFKVTKVGTIAGCYVTDGKITRDSGVRIIRDGVVIYEGQLDTLKRFKDDVKEVAQNYECGITIEKYNDLKEGDIIEAYIMEEVKR</sequence>
<comment type="function">
    <text evidence="2">One of the essential components for the initiation of protein synthesis. Protects formylmethionyl-tRNA from spontaneous hydrolysis and promotes its binding to the 30S ribosomal subunits. Also involved in the hydrolysis of GTP during the formation of the 70S ribosomal complex.</text>
</comment>
<comment type="subcellular location">
    <subcellularLocation>
        <location evidence="2">Cytoplasm</location>
    </subcellularLocation>
</comment>
<comment type="similarity">
    <text evidence="2">Belongs to the TRAFAC class translation factor GTPase superfamily. Classic translation factor GTPase family. IF-2 subfamily.</text>
</comment>
<evidence type="ECO:0000250" key="1"/>
<evidence type="ECO:0000255" key="2">
    <source>
        <dbReference type="HAMAP-Rule" id="MF_00100"/>
    </source>
</evidence>
<evidence type="ECO:0000256" key="3">
    <source>
        <dbReference type="SAM" id="MobiDB-lite"/>
    </source>
</evidence>
<protein>
    <recommendedName>
        <fullName evidence="2">Translation initiation factor IF-2</fullName>
    </recommendedName>
</protein>
<accession>B9IVA1</accession>